<accession>Q8PJR6</accession>
<comment type="function">
    <text evidence="1">Single strand-specific metallo-endoribonuclease involved in late-stage 70S ribosome quality control and in maturation of the 3' terminus of the 16S rRNA.</text>
</comment>
<comment type="cofactor">
    <cofactor evidence="1">
        <name>Zn(2+)</name>
        <dbReference type="ChEBI" id="CHEBI:29105"/>
    </cofactor>
    <text evidence="1">Binds 1 zinc ion.</text>
</comment>
<comment type="subcellular location">
    <subcellularLocation>
        <location evidence="1">Cytoplasm</location>
    </subcellularLocation>
</comment>
<comment type="similarity">
    <text evidence="1">Belongs to the endoribonuclease YbeY family.</text>
</comment>
<dbReference type="EC" id="3.1.-.-" evidence="1"/>
<dbReference type="EMBL" id="AE008923">
    <property type="protein sequence ID" value="AAM37315.1"/>
    <property type="molecule type" value="Genomic_DNA"/>
</dbReference>
<dbReference type="RefSeq" id="WP_003488340.1">
    <property type="nucleotide sequence ID" value="NC_003919.1"/>
</dbReference>
<dbReference type="SMR" id="Q8PJR6"/>
<dbReference type="GeneID" id="66911572"/>
<dbReference type="KEGG" id="xac:XAC2464"/>
<dbReference type="eggNOG" id="COG0319">
    <property type="taxonomic scope" value="Bacteria"/>
</dbReference>
<dbReference type="HOGENOM" id="CLU_106710_0_1_6"/>
<dbReference type="Proteomes" id="UP000000576">
    <property type="component" value="Chromosome"/>
</dbReference>
<dbReference type="GO" id="GO:0005737">
    <property type="term" value="C:cytoplasm"/>
    <property type="evidence" value="ECO:0007669"/>
    <property type="project" value="UniProtKB-SubCell"/>
</dbReference>
<dbReference type="GO" id="GO:0004222">
    <property type="term" value="F:metalloendopeptidase activity"/>
    <property type="evidence" value="ECO:0007669"/>
    <property type="project" value="InterPro"/>
</dbReference>
<dbReference type="GO" id="GO:0004521">
    <property type="term" value="F:RNA endonuclease activity"/>
    <property type="evidence" value="ECO:0007669"/>
    <property type="project" value="UniProtKB-UniRule"/>
</dbReference>
<dbReference type="GO" id="GO:0008270">
    <property type="term" value="F:zinc ion binding"/>
    <property type="evidence" value="ECO:0007669"/>
    <property type="project" value="UniProtKB-UniRule"/>
</dbReference>
<dbReference type="GO" id="GO:0006364">
    <property type="term" value="P:rRNA processing"/>
    <property type="evidence" value="ECO:0007669"/>
    <property type="project" value="UniProtKB-UniRule"/>
</dbReference>
<dbReference type="Gene3D" id="3.40.390.30">
    <property type="entry name" value="Metalloproteases ('zincins'), catalytic domain"/>
    <property type="match status" value="1"/>
</dbReference>
<dbReference type="HAMAP" id="MF_00009">
    <property type="entry name" value="Endoribonucl_YbeY"/>
    <property type="match status" value="1"/>
</dbReference>
<dbReference type="InterPro" id="IPR023091">
    <property type="entry name" value="MetalPrtase_cat_dom_sf_prd"/>
</dbReference>
<dbReference type="InterPro" id="IPR002036">
    <property type="entry name" value="YbeY"/>
</dbReference>
<dbReference type="InterPro" id="IPR020549">
    <property type="entry name" value="YbeY_CS"/>
</dbReference>
<dbReference type="NCBIfam" id="TIGR00043">
    <property type="entry name" value="rRNA maturation RNase YbeY"/>
    <property type="match status" value="1"/>
</dbReference>
<dbReference type="PANTHER" id="PTHR46986">
    <property type="entry name" value="ENDORIBONUCLEASE YBEY, CHLOROPLASTIC"/>
    <property type="match status" value="1"/>
</dbReference>
<dbReference type="PANTHER" id="PTHR46986:SF1">
    <property type="entry name" value="ENDORIBONUCLEASE YBEY, CHLOROPLASTIC"/>
    <property type="match status" value="1"/>
</dbReference>
<dbReference type="Pfam" id="PF02130">
    <property type="entry name" value="YbeY"/>
    <property type="match status" value="1"/>
</dbReference>
<dbReference type="SUPFAM" id="SSF55486">
    <property type="entry name" value="Metalloproteases ('zincins'), catalytic domain"/>
    <property type="match status" value="1"/>
</dbReference>
<dbReference type="PROSITE" id="PS01306">
    <property type="entry name" value="UPF0054"/>
    <property type="match status" value="1"/>
</dbReference>
<name>YBEY_XANAC</name>
<organism>
    <name type="scientific">Xanthomonas axonopodis pv. citri (strain 306)</name>
    <dbReference type="NCBI Taxonomy" id="190486"/>
    <lineage>
        <taxon>Bacteria</taxon>
        <taxon>Pseudomonadati</taxon>
        <taxon>Pseudomonadota</taxon>
        <taxon>Gammaproteobacteria</taxon>
        <taxon>Lysobacterales</taxon>
        <taxon>Lysobacteraceae</taxon>
        <taxon>Xanthomonas</taxon>
    </lineage>
</organism>
<proteinExistence type="inferred from homology"/>
<gene>
    <name evidence="1" type="primary">ybeY</name>
    <name type="ordered locus">XAC2464</name>
</gene>
<keyword id="KW-0963">Cytoplasm</keyword>
<keyword id="KW-0255">Endonuclease</keyword>
<keyword id="KW-0378">Hydrolase</keyword>
<keyword id="KW-0479">Metal-binding</keyword>
<keyword id="KW-0540">Nuclease</keyword>
<keyword id="KW-0690">Ribosome biogenesis</keyword>
<keyword id="KW-0698">rRNA processing</keyword>
<keyword id="KW-0862">Zinc</keyword>
<reference key="1">
    <citation type="journal article" date="2002" name="Nature">
        <title>Comparison of the genomes of two Xanthomonas pathogens with differing host specificities.</title>
        <authorList>
            <person name="da Silva A.C.R."/>
            <person name="Ferro J.A."/>
            <person name="Reinach F.C."/>
            <person name="Farah C.S."/>
            <person name="Furlan L.R."/>
            <person name="Quaggio R.B."/>
            <person name="Monteiro-Vitorello C.B."/>
            <person name="Van Sluys M.A."/>
            <person name="Almeida N.F. Jr."/>
            <person name="Alves L.M.C."/>
            <person name="do Amaral A.M."/>
            <person name="Bertolini M.C."/>
            <person name="Camargo L.E.A."/>
            <person name="Camarotte G."/>
            <person name="Cannavan F."/>
            <person name="Cardozo J."/>
            <person name="Chambergo F."/>
            <person name="Ciapina L.P."/>
            <person name="Cicarelli R.M.B."/>
            <person name="Coutinho L.L."/>
            <person name="Cursino-Santos J.R."/>
            <person name="El-Dorry H."/>
            <person name="Faria J.B."/>
            <person name="Ferreira A.J.S."/>
            <person name="Ferreira R.C.C."/>
            <person name="Ferro M.I.T."/>
            <person name="Formighieri E.F."/>
            <person name="Franco M.C."/>
            <person name="Greggio C.C."/>
            <person name="Gruber A."/>
            <person name="Katsuyama A.M."/>
            <person name="Kishi L.T."/>
            <person name="Leite R.P."/>
            <person name="Lemos E.G.M."/>
            <person name="Lemos M.V.F."/>
            <person name="Locali E.C."/>
            <person name="Machado M.A."/>
            <person name="Madeira A.M.B.N."/>
            <person name="Martinez-Rossi N.M."/>
            <person name="Martins E.C."/>
            <person name="Meidanis J."/>
            <person name="Menck C.F.M."/>
            <person name="Miyaki C.Y."/>
            <person name="Moon D.H."/>
            <person name="Moreira L.M."/>
            <person name="Novo M.T.M."/>
            <person name="Okura V.K."/>
            <person name="Oliveira M.C."/>
            <person name="Oliveira V.R."/>
            <person name="Pereira H.A."/>
            <person name="Rossi A."/>
            <person name="Sena J.A.D."/>
            <person name="Silva C."/>
            <person name="de Souza R.F."/>
            <person name="Spinola L.A.F."/>
            <person name="Takita M.A."/>
            <person name="Tamura R.E."/>
            <person name="Teixeira E.C."/>
            <person name="Tezza R.I.D."/>
            <person name="Trindade dos Santos M."/>
            <person name="Truffi D."/>
            <person name="Tsai S.M."/>
            <person name="White F.F."/>
            <person name="Setubal J.C."/>
            <person name="Kitajima J.P."/>
        </authorList>
    </citation>
    <scope>NUCLEOTIDE SEQUENCE [LARGE SCALE GENOMIC DNA]</scope>
    <source>
        <strain>306</strain>
    </source>
</reference>
<feature type="chain" id="PRO_0000102570" description="Endoribonuclease YbeY">
    <location>
        <begin position="1"/>
        <end position="161"/>
    </location>
</feature>
<feature type="binding site" evidence="1">
    <location>
        <position position="121"/>
    </location>
    <ligand>
        <name>Zn(2+)</name>
        <dbReference type="ChEBI" id="CHEBI:29105"/>
        <note>catalytic</note>
    </ligand>
</feature>
<feature type="binding site" evidence="1">
    <location>
        <position position="125"/>
    </location>
    <ligand>
        <name>Zn(2+)</name>
        <dbReference type="ChEBI" id="CHEBI:29105"/>
        <note>catalytic</note>
    </ligand>
</feature>
<feature type="binding site" evidence="1">
    <location>
        <position position="131"/>
    </location>
    <ligand>
        <name>Zn(2+)</name>
        <dbReference type="ChEBI" id="CHEBI:29105"/>
        <note>catalytic</note>
    </ligand>
</feature>
<protein>
    <recommendedName>
        <fullName evidence="1">Endoribonuclease YbeY</fullName>
        <ecNumber evidence="1">3.1.-.-</ecNumber>
    </recommendedName>
</protein>
<evidence type="ECO:0000255" key="1">
    <source>
        <dbReference type="HAMAP-Rule" id="MF_00009"/>
    </source>
</evidence>
<sequence length="161" mass="17539">MTKGPVRLDVAVSYALPRAGLPSAVSFRKWVAAALKGRIREADLAVRVVDEKEGCSLNHHYRGKDYATNVLSFPAELPEGLPKGIKMPLLGDLVICAPVVAREAAEQGKSLAAHYAHLTVHGTLHLLGWDHEDDKEAEAMEQLEREILADLGIDDPYAGEH</sequence>